<proteinExistence type="evidence at protein level"/>
<comment type="function">
    <text evidence="3 5 7 8">Transcriptional regulator of iron-responsive genes. Represses expression of SEF1 and genes for iron uptake if iron is present. Plays also a transcription-independent role in the direct inhibition of SEF1 function through protein complex formation and translocation to the cytoplasm, where SEF1 is destabilized. Promotes gastrointestinal commensalism in mice.</text>
</comment>
<comment type="subcellular location">
    <subcellularLocation>
        <location evidence="8">Cytoplasm</location>
    </subcellularLocation>
    <subcellularLocation>
        <location evidence="8">Nucleus</location>
    </subcellularLocation>
</comment>
<comment type="induction">
    <text evidence="4 5 6 7">Repressed by the HAP43 transcription regulator. Expression is also under the control of MAC1.</text>
</comment>
<dbReference type="EMBL" id="CP017623">
    <property type="protein sequence ID" value="AOW26633.1"/>
    <property type="molecule type" value="Genomic_DNA"/>
</dbReference>
<dbReference type="RefSeq" id="XP_723553.2">
    <property type="nucleotide sequence ID" value="XM_718460.2"/>
</dbReference>
<dbReference type="SMR" id="Q5AP95"/>
<dbReference type="BioGRID" id="1217961">
    <property type="interactions" value="3"/>
</dbReference>
<dbReference type="STRING" id="237561.Q5AP95"/>
<dbReference type="EnsemblFungi" id="C1_10020W_A-T">
    <property type="protein sequence ID" value="C1_10020W_A-T-p1"/>
    <property type="gene ID" value="C1_10020W_A"/>
</dbReference>
<dbReference type="GeneID" id="3634867"/>
<dbReference type="KEGG" id="cal:CAALFM_C110020WA"/>
<dbReference type="CGD" id="CAL0000194032">
    <property type="gene designation" value="SFU1"/>
</dbReference>
<dbReference type="VEuPathDB" id="FungiDB:C1_10020W_A"/>
<dbReference type="eggNOG" id="KOG1601">
    <property type="taxonomic scope" value="Eukaryota"/>
</dbReference>
<dbReference type="HOGENOM" id="CLU_040438_0_0_1"/>
<dbReference type="InParanoid" id="Q5AP95"/>
<dbReference type="OrthoDB" id="515401at2759"/>
<dbReference type="PHI-base" id="PHI:2618"/>
<dbReference type="PRO" id="PR:Q5AP95"/>
<dbReference type="Proteomes" id="UP000000559">
    <property type="component" value="Chromosome 1"/>
</dbReference>
<dbReference type="GO" id="GO:0005737">
    <property type="term" value="C:cytoplasm"/>
    <property type="evidence" value="ECO:0007669"/>
    <property type="project" value="UniProtKB-SubCell"/>
</dbReference>
<dbReference type="GO" id="GO:0005634">
    <property type="term" value="C:nucleus"/>
    <property type="evidence" value="ECO:0000318"/>
    <property type="project" value="GO_Central"/>
</dbReference>
<dbReference type="GO" id="GO:0003700">
    <property type="term" value="F:DNA-binding transcription factor activity"/>
    <property type="evidence" value="ECO:0000315"/>
    <property type="project" value="CGD"/>
</dbReference>
<dbReference type="GO" id="GO:0000981">
    <property type="term" value="F:DNA-binding transcription factor activity, RNA polymerase II-specific"/>
    <property type="evidence" value="ECO:0000318"/>
    <property type="project" value="GO_Central"/>
</dbReference>
<dbReference type="GO" id="GO:0000978">
    <property type="term" value="F:RNA polymerase II cis-regulatory region sequence-specific DNA binding"/>
    <property type="evidence" value="ECO:0000318"/>
    <property type="project" value="GO_Central"/>
</dbReference>
<dbReference type="GO" id="GO:0000976">
    <property type="term" value="F:transcription cis-regulatory region binding"/>
    <property type="evidence" value="ECO:0000314"/>
    <property type="project" value="CGD"/>
</dbReference>
<dbReference type="GO" id="GO:0008270">
    <property type="term" value="F:zinc ion binding"/>
    <property type="evidence" value="ECO:0007669"/>
    <property type="project" value="UniProtKB-KW"/>
</dbReference>
<dbReference type="GO" id="GO:0071280">
    <property type="term" value="P:cellular response to copper ion"/>
    <property type="evidence" value="ECO:0000315"/>
    <property type="project" value="CGD"/>
</dbReference>
<dbReference type="GO" id="GO:0071281">
    <property type="term" value="P:cellular response to iron ion"/>
    <property type="evidence" value="ECO:0000315"/>
    <property type="project" value="CGD"/>
</dbReference>
<dbReference type="GO" id="GO:0006879">
    <property type="term" value="P:intracellular iron ion homeostasis"/>
    <property type="evidence" value="ECO:0000315"/>
    <property type="project" value="CGD"/>
</dbReference>
<dbReference type="GO" id="GO:0000122">
    <property type="term" value="P:negative regulation of transcription by RNA polymerase II"/>
    <property type="evidence" value="ECO:0000315"/>
    <property type="project" value="CGD"/>
</dbReference>
<dbReference type="GO" id="GO:0045944">
    <property type="term" value="P:positive regulation of transcription by RNA polymerase II"/>
    <property type="evidence" value="ECO:0000315"/>
    <property type="project" value="CGD"/>
</dbReference>
<dbReference type="CDD" id="cd00202">
    <property type="entry name" value="ZnF_GATA"/>
    <property type="match status" value="2"/>
</dbReference>
<dbReference type="FunFam" id="3.30.50.10:FF:000007">
    <property type="entry name" value="Nitrogen regulatory AreA, N-terminal"/>
    <property type="match status" value="1"/>
</dbReference>
<dbReference type="FunFam" id="3.30.50.10:FF:000039">
    <property type="entry name" value="Siderophore transcription factor SreA"/>
    <property type="match status" value="1"/>
</dbReference>
<dbReference type="Gene3D" id="3.30.50.10">
    <property type="entry name" value="Erythroid Transcription Factor GATA-1, subunit A"/>
    <property type="match status" value="2"/>
</dbReference>
<dbReference type="InterPro" id="IPR039355">
    <property type="entry name" value="Transcription_factor_GATA"/>
</dbReference>
<dbReference type="InterPro" id="IPR000679">
    <property type="entry name" value="Znf_GATA"/>
</dbReference>
<dbReference type="InterPro" id="IPR013088">
    <property type="entry name" value="Znf_NHR/GATA"/>
</dbReference>
<dbReference type="PANTHER" id="PTHR10071:SF281">
    <property type="entry name" value="BOX A-BINDING FACTOR-RELATED"/>
    <property type="match status" value="1"/>
</dbReference>
<dbReference type="PANTHER" id="PTHR10071">
    <property type="entry name" value="TRANSCRIPTION FACTOR GATA FAMILY MEMBER"/>
    <property type="match status" value="1"/>
</dbReference>
<dbReference type="Pfam" id="PF00320">
    <property type="entry name" value="GATA"/>
    <property type="match status" value="2"/>
</dbReference>
<dbReference type="PRINTS" id="PR00619">
    <property type="entry name" value="GATAZNFINGER"/>
</dbReference>
<dbReference type="SMART" id="SM00401">
    <property type="entry name" value="ZnF_GATA"/>
    <property type="match status" value="2"/>
</dbReference>
<dbReference type="SUPFAM" id="SSF57716">
    <property type="entry name" value="Glucocorticoid receptor-like (DNA-binding domain)"/>
    <property type="match status" value="2"/>
</dbReference>
<dbReference type="PROSITE" id="PS00344">
    <property type="entry name" value="GATA_ZN_FINGER_1"/>
    <property type="match status" value="2"/>
</dbReference>
<dbReference type="PROSITE" id="PS50114">
    <property type="entry name" value="GATA_ZN_FINGER_2"/>
    <property type="match status" value="2"/>
</dbReference>
<organism>
    <name type="scientific">Candida albicans (strain SC5314 / ATCC MYA-2876)</name>
    <name type="common">Yeast</name>
    <dbReference type="NCBI Taxonomy" id="237561"/>
    <lineage>
        <taxon>Eukaryota</taxon>
        <taxon>Fungi</taxon>
        <taxon>Dikarya</taxon>
        <taxon>Ascomycota</taxon>
        <taxon>Saccharomycotina</taxon>
        <taxon>Pichiomycetes</taxon>
        <taxon>Debaryomycetaceae</taxon>
        <taxon>Candida/Lodderomyces clade</taxon>
        <taxon>Candida</taxon>
    </lineage>
</organism>
<keyword id="KW-0963">Cytoplasm</keyword>
<keyword id="KW-0408">Iron</keyword>
<keyword id="KW-0479">Metal-binding</keyword>
<keyword id="KW-0539">Nucleus</keyword>
<keyword id="KW-1185">Reference proteome</keyword>
<keyword id="KW-0677">Repeat</keyword>
<keyword id="KW-0678">Repressor</keyword>
<keyword id="KW-0804">Transcription</keyword>
<keyword id="KW-0805">Transcription regulation</keyword>
<keyword id="KW-0862">Zinc</keyword>
<keyword id="KW-0863">Zinc-finger</keyword>
<accession>Q5AP95</accession>
<accession>A0A1D8PER2</accession>
<gene>
    <name type="primary">SFU1</name>
    <name type="ordered locus">CAALFM_C110020WA</name>
    <name type="ORF">CaO19.12333</name>
    <name type="ORF">CaO19.4869</name>
</gene>
<evidence type="ECO:0000255" key="1">
    <source>
        <dbReference type="PROSITE-ProRule" id="PRU00094"/>
    </source>
</evidence>
<evidence type="ECO:0000256" key="2">
    <source>
        <dbReference type="SAM" id="MobiDB-lite"/>
    </source>
</evidence>
<evidence type="ECO:0000269" key="3">
    <source>
    </source>
</evidence>
<evidence type="ECO:0000269" key="4">
    <source>
    </source>
</evidence>
<evidence type="ECO:0000269" key="5">
    <source>
    </source>
</evidence>
<evidence type="ECO:0000269" key="6">
    <source>
    </source>
</evidence>
<evidence type="ECO:0000269" key="7">
    <source>
    </source>
</evidence>
<evidence type="ECO:0000269" key="8">
    <source>
    </source>
</evidence>
<protein>
    <recommendedName>
        <fullName>Suppressor of ferric uptake 1</fullName>
    </recommendedName>
</protein>
<name>SFU1_CANAL</name>
<sequence length="517" mass="56353">MPTSPTESIPNSSTKEQPILPKMLPTAKSPHTTPAQSPQNSDHHHHHQQTPPQPTDGQQCSNCGTTKTPLWRRAPDGTLICNACGLYYRSNNTHRPVNLKRPPNTIAVVKEEEGSCKGDGRCNGTGGSAACKGCPAYNNRIVAKKALEKSPKNDSSRAPIDKSLKRSTSTDATTEDESSLAIACFNCGTTITPLWRRDDAGNTICNACGLFYRLHGSHRPIKMKRPTIKRRKRNVSDKKSKDEVQMHSSDQSPIVASDPISPTPHNNENNNNVTNITTTTKTPTRSPHYYQPPPQYPYQHHPINSTTSSAINRLPPISYQSPYQTAPLSHSPMQSSSSYSPGASSVIPSSYYPPYSGSGRIPNGPGPVPGPPPPPPPTQSQPHHQQITTSPTSQSYGSLRAPIHITKRGYTPENIRLPSIQLTSSTSSNSETKLPPITNHSEKCCSNCAGPKSLAPMAIDFTASYRFNNIDSQTKLTKEDQNDSEGVSRDNDTRDENKPIKQEEHRSALSIGKLLNG</sequence>
<feature type="chain" id="PRO_0000422809" description="Suppressor of ferric uptake 1">
    <location>
        <begin position="1"/>
        <end position="517"/>
    </location>
</feature>
<feature type="zinc finger region" description="GATA-type 1" evidence="1">
    <location>
        <begin position="60"/>
        <end position="84"/>
    </location>
</feature>
<feature type="zinc finger region" description="GATA-type 2" evidence="1">
    <location>
        <begin position="184"/>
        <end position="208"/>
    </location>
</feature>
<feature type="region of interest" description="Disordered" evidence="2">
    <location>
        <begin position="1"/>
        <end position="61"/>
    </location>
</feature>
<feature type="region of interest" description="Disordered" evidence="2">
    <location>
        <begin position="147"/>
        <end position="172"/>
    </location>
</feature>
<feature type="region of interest" description="Disordered" evidence="2">
    <location>
        <begin position="222"/>
        <end position="435"/>
    </location>
</feature>
<feature type="region of interest" description="Disordered" evidence="2">
    <location>
        <begin position="472"/>
        <end position="517"/>
    </location>
</feature>
<feature type="compositionally biased region" description="Polar residues" evidence="2">
    <location>
        <begin position="1"/>
        <end position="16"/>
    </location>
</feature>
<feature type="compositionally biased region" description="Basic and acidic residues" evidence="2">
    <location>
        <begin position="147"/>
        <end position="164"/>
    </location>
</feature>
<feature type="compositionally biased region" description="Basic residues" evidence="2">
    <location>
        <begin position="222"/>
        <end position="233"/>
    </location>
</feature>
<feature type="compositionally biased region" description="Basic and acidic residues" evidence="2">
    <location>
        <begin position="234"/>
        <end position="245"/>
    </location>
</feature>
<feature type="compositionally biased region" description="Low complexity" evidence="2">
    <location>
        <begin position="263"/>
        <end position="289"/>
    </location>
</feature>
<feature type="compositionally biased region" description="Low complexity" evidence="2">
    <location>
        <begin position="327"/>
        <end position="358"/>
    </location>
</feature>
<feature type="compositionally biased region" description="Pro residues" evidence="2">
    <location>
        <begin position="364"/>
        <end position="379"/>
    </location>
</feature>
<feature type="compositionally biased region" description="Polar residues" evidence="2">
    <location>
        <begin position="380"/>
        <end position="397"/>
    </location>
</feature>
<feature type="compositionally biased region" description="Low complexity" evidence="2">
    <location>
        <begin position="423"/>
        <end position="432"/>
    </location>
</feature>
<feature type="compositionally biased region" description="Basic and acidic residues" evidence="2">
    <location>
        <begin position="476"/>
        <end position="507"/>
    </location>
</feature>
<reference key="1">
    <citation type="journal article" date="2004" name="Proc. Natl. Acad. Sci. U.S.A.">
        <title>The diploid genome sequence of Candida albicans.</title>
        <authorList>
            <person name="Jones T."/>
            <person name="Federspiel N.A."/>
            <person name="Chibana H."/>
            <person name="Dungan J."/>
            <person name="Kalman S."/>
            <person name="Magee B.B."/>
            <person name="Newport G."/>
            <person name="Thorstenson Y.R."/>
            <person name="Agabian N."/>
            <person name="Magee P.T."/>
            <person name="Davis R.W."/>
            <person name="Scherer S."/>
        </authorList>
    </citation>
    <scope>NUCLEOTIDE SEQUENCE [LARGE SCALE GENOMIC DNA]</scope>
    <source>
        <strain>SC5314 / ATCC MYA-2876</strain>
    </source>
</reference>
<reference key="2">
    <citation type="journal article" date="2007" name="Genome Biol.">
        <title>Assembly of the Candida albicans genome into sixteen supercontigs aligned on the eight chromosomes.</title>
        <authorList>
            <person name="van het Hoog M."/>
            <person name="Rast T.J."/>
            <person name="Martchenko M."/>
            <person name="Grindle S."/>
            <person name="Dignard D."/>
            <person name="Hogues H."/>
            <person name="Cuomo C."/>
            <person name="Berriman M."/>
            <person name="Scherer S."/>
            <person name="Magee B.B."/>
            <person name="Whiteway M."/>
            <person name="Chibana H."/>
            <person name="Nantel A."/>
            <person name="Magee P.T."/>
        </authorList>
    </citation>
    <scope>GENOME REANNOTATION</scope>
    <source>
        <strain>SC5314 / ATCC MYA-2876</strain>
    </source>
</reference>
<reference key="3">
    <citation type="journal article" date="2013" name="Genome Biol.">
        <title>Assembly of a phased diploid Candida albicans genome facilitates allele-specific measurements and provides a simple model for repeat and indel structure.</title>
        <authorList>
            <person name="Muzzey D."/>
            <person name="Schwartz K."/>
            <person name="Weissman J.S."/>
            <person name="Sherlock G."/>
        </authorList>
    </citation>
    <scope>NUCLEOTIDE SEQUENCE [LARGE SCALE GENOMIC DNA]</scope>
    <scope>GENOME REANNOTATION</scope>
    <source>
        <strain>SC5314 / ATCC MYA-2876</strain>
    </source>
</reference>
<reference key="4">
    <citation type="journal article" date="2004" name="Mol. Microbiol.">
        <title>Regulatory networks affected by iron availability in Candida albicans.</title>
        <authorList>
            <person name="Lan C.Y."/>
            <person name="Rodarte G."/>
            <person name="Murillo L.A."/>
            <person name="Jones T."/>
            <person name="Davis R.W."/>
            <person name="Dungan J."/>
            <person name="Newport G."/>
            <person name="Agabian N."/>
        </authorList>
    </citation>
    <scope>FUNCTION</scope>
</reference>
<reference key="5">
    <citation type="journal article" date="2008" name="Microbiology">
        <title>Copper-dependent transcriptional regulation by Candida albicans Mac1p.</title>
        <authorList>
            <person name="Woodacre A."/>
            <person name="Mason R.P."/>
            <person name="Jeeves R.E."/>
            <person name="Cashmore A.M."/>
        </authorList>
    </citation>
    <scope>INDUCTION</scope>
</reference>
<reference key="6">
    <citation type="journal article" date="2011" name="Cell Host Microbe">
        <title>An iron homeostasis regulatory circuit with reciprocal roles in Candida albicans commensalism and pathogenesis.</title>
        <authorList>
            <person name="Chen C."/>
            <person name="Pande K."/>
            <person name="French S.D."/>
            <person name="Tuch B.B."/>
            <person name="Noble S.M."/>
        </authorList>
    </citation>
    <scope>FUNCTION</scope>
    <scope>DNA-BINDING</scope>
    <scope>INDUCTION</scope>
</reference>
<reference key="7">
    <citation type="journal article" date="2011" name="Eukaryot. Cell">
        <title>Candida albicans Hap43 is a repressor induced under low-iron conditions and is essential for iron-responsive transcriptional regulation and virulence.</title>
        <authorList>
            <person name="Hsu P.C."/>
            <person name="Yang C.Y."/>
            <person name="Lan C.Y."/>
        </authorList>
    </citation>
    <scope>FUNCTION</scope>
    <scope>INDUCTION</scope>
</reference>
<reference key="8">
    <citation type="journal article" date="2011" name="J. Biol. Chem.">
        <title>Cap2-HAP complex is a critical transcriptional regulator that has dual but contrasting roles in regulation of iron homeostasis in Candida albicans.</title>
        <authorList>
            <person name="Singh R.P."/>
            <person name="Prasad H.K."/>
            <person name="Sinha I."/>
            <person name="Agarwal N."/>
            <person name="Natarajan K."/>
        </authorList>
    </citation>
    <scope>INDUCTION</scope>
</reference>
<reference key="9">
    <citation type="journal article" date="2012" name="PLoS Pathog.">
        <title>Post-transcriptional regulation of the Sef1 transcription factor controls the virulence of Candida albicans in its mammalian host.</title>
        <authorList>
            <person name="Chen C."/>
            <person name="Noble S.M."/>
        </authorList>
    </citation>
    <scope>FUNCTION</scope>
    <scope>SUBCELLULAR LOCATION</scope>
    <scope>INTERACTION WITH SEF1</scope>
</reference>